<organism>
    <name type="scientific">Bos taurus</name>
    <name type="common">Bovine</name>
    <dbReference type="NCBI Taxonomy" id="9913"/>
    <lineage>
        <taxon>Eukaryota</taxon>
        <taxon>Metazoa</taxon>
        <taxon>Chordata</taxon>
        <taxon>Craniata</taxon>
        <taxon>Vertebrata</taxon>
        <taxon>Euteleostomi</taxon>
        <taxon>Mammalia</taxon>
        <taxon>Eutheria</taxon>
        <taxon>Laurasiatheria</taxon>
        <taxon>Artiodactyla</taxon>
        <taxon>Ruminantia</taxon>
        <taxon>Pecora</taxon>
        <taxon>Bovidae</taxon>
        <taxon>Bovinae</taxon>
        <taxon>Bos</taxon>
    </lineage>
</organism>
<proteinExistence type="evidence at transcript level"/>
<name>TYRP2_BOVIN</name>
<comment type="function">
    <text evidence="3">Plays a role in melanin biosynthesis. Catalyzes the conversion of L-dopachrome into 5,6-dihydroxyindole-2-carboxylic acid (DHICA).</text>
</comment>
<comment type="catalytic activity">
    <reaction evidence="2">
        <text>L-dopachrome = 5,6-dihydroxyindole-2-carboxylate</text>
        <dbReference type="Rhea" id="RHEA:13041"/>
        <dbReference type="ChEBI" id="CHEBI:16875"/>
        <dbReference type="ChEBI" id="CHEBI:57509"/>
        <dbReference type="EC" id="5.3.3.12"/>
    </reaction>
</comment>
<comment type="cofactor">
    <cofactor evidence="2">
        <name>Zn(2+)</name>
        <dbReference type="ChEBI" id="CHEBI:29105"/>
    </cofactor>
    <text evidence="2">Binds 2 Zn(2+) ions per subunit.</text>
</comment>
<comment type="pathway">
    <text>Pigment biosynthesis; melanin biosynthesis.</text>
</comment>
<comment type="subunit">
    <text evidence="3">Forms an OPN3-dependent complex with TYR in response to blue light in melanocytes.</text>
</comment>
<comment type="subcellular location">
    <subcellularLocation>
        <location evidence="3">Melanosome membrane</location>
        <topology evidence="3">Single-pass type I membrane protein</topology>
    </subcellularLocation>
    <subcellularLocation>
        <location evidence="2">Melanosome</location>
    </subcellularLocation>
    <text evidence="2">Proper trafficking to melanosome is regulated by SGSM2, ANKRD27, RAB9A, RAB32 and RAB38.</text>
</comment>
<comment type="PTM">
    <text evidence="2">Glycosylated.</text>
</comment>
<comment type="similarity">
    <text evidence="7">Belongs to the tyrosinase family.</text>
</comment>
<feature type="signal peptide" evidence="4">
    <location>
        <begin position="1"/>
        <end position="23"/>
    </location>
</feature>
<feature type="chain" id="PRO_0000186730" description="L-dopachrome tautomerase">
    <location>
        <begin position="24"/>
        <end position="517"/>
    </location>
</feature>
<feature type="topological domain" description="Lumenal, melanosome" evidence="4">
    <location>
        <begin position="24"/>
        <end position="469"/>
    </location>
</feature>
<feature type="transmembrane region" description="Helical" evidence="4">
    <location>
        <begin position="470"/>
        <end position="490"/>
    </location>
</feature>
<feature type="topological domain" description="Cytoplasmic" evidence="4">
    <location>
        <begin position="491"/>
        <end position="517"/>
    </location>
</feature>
<feature type="binding site" evidence="1">
    <location>
        <position position="189"/>
    </location>
    <ligand>
        <name>Zn(2+)</name>
        <dbReference type="ChEBI" id="CHEBI:29105"/>
        <label>A</label>
    </ligand>
</feature>
<feature type="binding site" evidence="1">
    <location>
        <position position="211"/>
    </location>
    <ligand>
        <name>Zn(2+)</name>
        <dbReference type="ChEBI" id="CHEBI:29105"/>
        <label>A</label>
    </ligand>
</feature>
<feature type="binding site" evidence="1">
    <location>
        <position position="220"/>
    </location>
    <ligand>
        <name>Zn(2+)</name>
        <dbReference type="ChEBI" id="CHEBI:29105"/>
        <label>A</label>
    </ligand>
</feature>
<feature type="binding site" evidence="1">
    <location>
        <position position="369"/>
    </location>
    <ligand>
        <name>Zn(2+)</name>
        <dbReference type="ChEBI" id="CHEBI:29105"/>
        <label>B</label>
    </ligand>
</feature>
<feature type="binding site" evidence="1">
    <location>
        <position position="373"/>
    </location>
    <ligand>
        <name>Zn(2+)</name>
        <dbReference type="ChEBI" id="CHEBI:29105"/>
        <label>B</label>
    </ligand>
</feature>
<feature type="binding site" evidence="1">
    <location>
        <position position="396"/>
    </location>
    <ligand>
        <name>Zn(2+)</name>
        <dbReference type="ChEBI" id="CHEBI:29105"/>
        <label>B</label>
    </ligand>
</feature>
<feature type="glycosylation site" description="N-linked (GlcNAc...) asparagine" evidence="4">
    <location>
        <position position="170"/>
    </location>
</feature>
<feature type="glycosylation site" description="N-linked (GlcNAc...) asparagine" evidence="4">
    <location>
        <position position="178"/>
    </location>
</feature>
<feature type="glycosylation site" description="N-linked (GlcNAc...) asparagine" evidence="4">
    <location>
        <position position="237"/>
    </location>
</feature>
<feature type="glycosylation site" description="N-linked (GlcNAc...) asparagine" evidence="4">
    <location>
        <position position="300"/>
    </location>
</feature>
<feature type="glycosylation site" description="N-linked (GlcNAc...) asparagine" evidence="4">
    <location>
        <position position="342"/>
    </location>
</feature>
<feature type="glycosylation site" description="N-linked (GlcNAc...) asparagine" evidence="4">
    <location>
        <position position="377"/>
    </location>
</feature>
<feature type="sequence variant" evidence="5 6">
    <original>L</original>
    <variation>P</variation>
    <location>
        <position position="152"/>
    </location>
</feature>
<feature type="sequence variant" evidence="5 6">
    <original>R</original>
    <variation>Q</variation>
    <location>
        <position position="173"/>
    </location>
</feature>
<reference key="1">
    <citation type="submission" date="2003-04" db="EMBL/GenBank/DDBJ databases">
        <title>Transcriptional regulation of bovine TRP2 gene.</title>
        <authorList>
            <person name="Guibert S."/>
            <person name="Leveziel H."/>
            <person name="Julien R."/>
            <person name="Oulmouden A."/>
        </authorList>
    </citation>
    <scope>NUCLEOTIDE SEQUENCE [MRNA]</scope>
    <scope>VARIANTS PRO-152 AND GLN-173</scope>
    <source>
        <tissue>Skin</tissue>
    </source>
</reference>
<reference key="2">
    <citation type="journal article" date="1996" name="Mamm. Genome">
        <title>Tyrosinase-related protein-2 (DCT; TYRP2) maps to bovine chromosome 12.</title>
        <authorList>
            <person name="Hawkins G.A."/>
            <person name="Eggen A."/>
            <person name="Hayes H."/>
            <person name="Elduque C."/>
            <person name="Bishop M.D."/>
        </authorList>
    </citation>
    <scope>NUCLEOTIDE SEQUENCE [GENOMIC DNA] OF 144-191</scope>
</reference>
<reference key="3">
    <citation type="submission" date="1999-05" db="EMBL/GenBank/DDBJ databases">
        <title>A SNP in TYRP2 is used for linkage mapping on cattle chromosome 12.</title>
        <authorList>
            <person name="Schmutz S.M."/>
            <person name="Berryere T.G."/>
            <person name="Buchanan F.C."/>
        </authorList>
    </citation>
    <scope>NUCLEOTIDE SEQUENCE [GENOMIC DNA] OF 145-190</scope>
    <scope>VARIANTS PRO-152 AND GLN-173</scope>
    <source>
        <strain>Hereford</strain>
    </source>
</reference>
<dbReference type="EC" id="5.3.3.12"/>
<dbReference type="EMBL" id="AY278108">
    <property type="protein sequence ID" value="AAP33051.1"/>
    <property type="molecule type" value="mRNA"/>
</dbReference>
<dbReference type="EMBL" id="U46153">
    <property type="protein sequence ID" value="AAC48617.1"/>
    <property type="molecule type" value="Genomic_DNA"/>
</dbReference>
<dbReference type="EMBL" id="AF152005">
    <property type="protein sequence ID" value="AAD41516.1"/>
    <property type="molecule type" value="Genomic_DNA"/>
</dbReference>
<dbReference type="RefSeq" id="NP_001012684.1">
    <property type="nucleotide sequence ID" value="NM_001012666.2"/>
</dbReference>
<dbReference type="SMR" id="Q95119"/>
<dbReference type="FunCoup" id="Q95119">
    <property type="interactions" value="6"/>
</dbReference>
<dbReference type="STRING" id="9913.ENSBTAP00000034765"/>
<dbReference type="GlyCosmos" id="Q95119">
    <property type="glycosylation" value="6 sites, No reported glycans"/>
</dbReference>
<dbReference type="GlyGen" id="Q95119">
    <property type="glycosylation" value="6 sites"/>
</dbReference>
<dbReference type="PaxDb" id="9913-ENSBTAP00000034765"/>
<dbReference type="GeneID" id="280761"/>
<dbReference type="KEGG" id="bta:280761"/>
<dbReference type="CTD" id="1638"/>
<dbReference type="eggNOG" id="ENOG502QRNA">
    <property type="taxonomic scope" value="Eukaryota"/>
</dbReference>
<dbReference type="InParanoid" id="Q95119"/>
<dbReference type="OrthoDB" id="6132182at2759"/>
<dbReference type="UniPathway" id="UPA00785"/>
<dbReference type="Proteomes" id="UP000009136">
    <property type="component" value="Unplaced"/>
</dbReference>
<dbReference type="GO" id="GO:0005829">
    <property type="term" value="C:cytosol"/>
    <property type="evidence" value="ECO:0000250"/>
    <property type="project" value="UniProtKB"/>
</dbReference>
<dbReference type="GO" id="GO:0042470">
    <property type="term" value="C:melanosome"/>
    <property type="evidence" value="ECO:0000250"/>
    <property type="project" value="UniProtKB"/>
</dbReference>
<dbReference type="GO" id="GO:0033162">
    <property type="term" value="C:melanosome membrane"/>
    <property type="evidence" value="ECO:0007669"/>
    <property type="project" value="UniProtKB-SubCell"/>
</dbReference>
<dbReference type="GO" id="GO:0004167">
    <property type="term" value="F:dopachrome isomerase activity"/>
    <property type="evidence" value="ECO:0000250"/>
    <property type="project" value="UniProtKB"/>
</dbReference>
<dbReference type="GO" id="GO:0046872">
    <property type="term" value="F:metal ion binding"/>
    <property type="evidence" value="ECO:0007669"/>
    <property type="project" value="UniProtKB-KW"/>
</dbReference>
<dbReference type="GO" id="GO:0016491">
    <property type="term" value="F:oxidoreductase activity"/>
    <property type="evidence" value="ECO:0007669"/>
    <property type="project" value="InterPro"/>
</dbReference>
<dbReference type="GO" id="GO:0048066">
    <property type="term" value="P:developmental pigmentation"/>
    <property type="evidence" value="ECO:0000318"/>
    <property type="project" value="GO_Central"/>
</dbReference>
<dbReference type="GO" id="GO:0006583">
    <property type="term" value="P:melanin biosynthetic process from tyrosine"/>
    <property type="evidence" value="ECO:0000250"/>
    <property type="project" value="UniProtKB"/>
</dbReference>
<dbReference type="GO" id="GO:0002052">
    <property type="term" value="P:positive regulation of neuroblast proliferation"/>
    <property type="evidence" value="ECO:0000318"/>
    <property type="project" value="GO_Central"/>
</dbReference>
<dbReference type="GO" id="GO:0009637">
    <property type="term" value="P:response to blue light"/>
    <property type="evidence" value="ECO:0000250"/>
    <property type="project" value="UniProtKB"/>
</dbReference>
<dbReference type="GO" id="GO:0021847">
    <property type="term" value="P:ventricular zone neuroblast division"/>
    <property type="evidence" value="ECO:0000318"/>
    <property type="project" value="GO_Central"/>
</dbReference>
<dbReference type="FunFam" id="1.10.1280.10:FF:000002">
    <property type="entry name" value="L-dopachrome tautomerase"/>
    <property type="match status" value="1"/>
</dbReference>
<dbReference type="Gene3D" id="1.10.1280.10">
    <property type="entry name" value="Di-copper center containing domain from catechol oxidase"/>
    <property type="match status" value="1"/>
</dbReference>
<dbReference type="InterPro" id="IPR008922">
    <property type="entry name" value="Di-copper_centre_dom_sf"/>
</dbReference>
<dbReference type="InterPro" id="IPR050316">
    <property type="entry name" value="Tyrosinase/Hemocyanin"/>
</dbReference>
<dbReference type="InterPro" id="IPR002227">
    <property type="entry name" value="Tyrosinase_Cu-bd"/>
</dbReference>
<dbReference type="PANTHER" id="PTHR11474:SF4">
    <property type="entry name" value="L-DOPACHROME TAUTOMERASE"/>
    <property type="match status" value="1"/>
</dbReference>
<dbReference type="PANTHER" id="PTHR11474">
    <property type="entry name" value="TYROSINASE FAMILY MEMBER"/>
    <property type="match status" value="1"/>
</dbReference>
<dbReference type="Pfam" id="PF00264">
    <property type="entry name" value="Tyrosinase"/>
    <property type="match status" value="1"/>
</dbReference>
<dbReference type="PRINTS" id="PR00092">
    <property type="entry name" value="TYROSINASE"/>
</dbReference>
<dbReference type="SUPFAM" id="SSF48056">
    <property type="entry name" value="Di-copper centre-containing domain"/>
    <property type="match status" value="1"/>
</dbReference>
<dbReference type="PROSITE" id="PS00497">
    <property type="entry name" value="TYROSINASE_1"/>
    <property type="match status" value="1"/>
</dbReference>
<dbReference type="PROSITE" id="PS00498">
    <property type="entry name" value="TYROSINASE_2"/>
    <property type="match status" value="1"/>
</dbReference>
<gene>
    <name type="primary">DCT</name>
    <name type="synonym">TYRP2</name>
</gene>
<accession>Q95119</accession>
<accession>Q863I1</accession>
<accession>Q9XSZ0</accession>
<protein>
    <recommendedName>
        <fullName>L-dopachrome tautomerase</fullName>
        <shortName>DCT</shortName>
        <shortName>DT</shortName>
        <ecNumber>5.3.3.12</ecNumber>
    </recommendedName>
    <alternativeName>
        <fullName>L-dopachrome Delta-isomerase</fullName>
    </alternativeName>
    <alternativeName>
        <fullName>Tyrosinase-related protein 2</fullName>
        <shortName>TRP-2</shortName>
        <shortName>TRP2</shortName>
    </alternativeName>
</protein>
<sequence length="517" mass="58787">MSPLGWGLLLGCLGCALPSGARAQFPRVCMTVGSLQAKECCPPLGADPANVCGSREGRGQCAEVQTDTRPWSGPYVLRNQDDRERWPRKFFDRTCRCTGNFAGYNCGNCRFGWTGPKCDQKKPLVVRRDVHSLTPQEREQFLDALDLAKYTLHPDYVITTQHWLGLLGPNGTRPQIANCSIYDFFVWLHYYSVRDTLLGPGRPYKAIDFSHQGPAFVTWHRYHLLWLERDLQRLTGNESFALPYWNFATGRNECDVCTDQLLGAARQDDPTLISQNSRFSSWEIVCDSLNDYNRRVTLCNGTYEGLLKRNQMGRNSEKLPTLKDIQNCLSLKKFDSPPFFQNSTLSFRNALEGFGKADGTLDSQVMNFHNLVHSFLNGTSALPHSAANDPVFVVLHSFTDAIFDEWMKRFNPPVDAWPRELAPIGHNRMYNMVPFFPPVTNEELFLTADQLGYSYAIDLPVEETPDWTTVLSVVTGMLVVLVVLFALLLFLQYRRLRKGYTPLVETQLSNKRYTEEA</sequence>
<evidence type="ECO:0000250" key="1"/>
<evidence type="ECO:0000250" key="2">
    <source>
        <dbReference type="UniProtKB" id="P29812"/>
    </source>
</evidence>
<evidence type="ECO:0000250" key="3">
    <source>
        <dbReference type="UniProtKB" id="P40126"/>
    </source>
</evidence>
<evidence type="ECO:0000255" key="4"/>
<evidence type="ECO:0000269" key="5">
    <source ref="1"/>
</evidence>
<evidence type="ECO:0000269" key="6">
    <source ref="3"/>
</evidence>
<evidence type="ECO:0000305" key="7"/>
<keyword id="KW-0325">Glycoprotein</keyword>
<keyword id="KW-0413">Isomerase</keyword>
<keyword id="KW-0470">Melanin biosynthesis</keyword>
<keyword id="KW-0472">Membrane</keyword>
<keyword id="KW-0479">Metal-binding</keyword>
<keyword id="KW-1185">Reference proteome</keyword>
<keyword id="KW-0732">Signal</keyword>
<keyword id="KW-0812">Transmembrane</keyword>
<keyword id="KW-1133">Transmembrane helix</keyword>
<keyword id="KW-0862">Zinc</keyword>